<proteinExistence type="inferred from homology"/>
<gene>
    <name type="ordered locus">Kcr_1480</name>
</gene>
<comment type="function">
    <text evidence="1">Prenyltransferase that catalyzes the transfer of the geranylgeranyl moiety of geranylgeranyl diphosphate (GGPP) to the C2 hydroxyl of (S)-3-O-geranylgeranylglyceryl phosphate (GGGP). This reaction is the second ether-bond-formation step in the biosynthesis of archaeal membrane lipids.</text>
</comment>
<comment type="catalytic activity">
    <reaction evidence="1">
        <text>sn-3-O-(geranylgeranyl)glycerol 1-phosphate + (2E,6E,10E)-geranylgeranyl diphosphate = 2,3-bis-O-(geranylgeranyl)-sn-glycerol 1-phosphate + diphosphate</text>
        <dbReference type="Rhea" id="RHEA:18109"/>
        <dbReference type="ChEBI" id="CHEBI:33019"/>
        <dbReference type="ChEBI" id="CHEBI:57677"/>
        <dbReference type="ChEBI" id="CHEBI:58756"/>
        <dbReference type="ChEBI" id="CHEBI:58837"/>
        <dbReference type="EC" id="2.5.1.42"/>
    </reaction>
</comment>
<comment type="cofactor">
    <cofactor evidence="1">
        <name>Mg(2+)</name>
        <dbReference type="ChEBI" id="CHEBI:18420"/>
    </cofactor>
</comment>
<comment type="pathway">
    <text evidence="1">Membrane lipid metabolism; glycerophospholipid metabolism.</text>
</comment>
<comment type="subcellular location">
    <subcellularLocation>
        <location evidence="1">Cell membrane</location>
        <topology evidence="1">Multi-pass membrane protein</topology>
    </subcellularLocation>
</comment>
<comment type="similarity">
    <text evidence="1">Belongs to the UbiA prenyltransferase family. DGGGP synthase subfamily.</text>
</comment>
<keyword id="KW-1003">Cell membrane</keyword>
<keyword id="KW-0444">Lipid biosynthesis</keyword>
<keyword id="KW-0443">Lipid metabolism</keyword>
<keyword id="KW-0460">Magnesium</keyword>
<keyword id="KW-0472">Membrane</keyword>
<keyword id="KW-0594">Phospholipid biosynthesis</keyword>
<keyword id="KW-1208">Phospholipid metabolism</keyword>
<keyword id="KW-1185">Reference proteome</keyword>
<keyword id="KW-0808">Transferase</keyword>
<keyword id="KW-0812">Transmembrane</keyword>
<keyword id="KW-1133">Transmembrane helix</keyword>
<protein>
    <recommendedName>
        <fullName evidence="1">Digeranylgeranylglyceryl phosphate synthase</fullName>
        <shortName evidence="1">DGGGP synthase</shortName>
        <shortName evidence="1">DGGGPS</shortName>
        <ecNumber evidence="1">2.5.1.42</ecNumber>
    </recommendedName>
    <alternativeName>
        <fullName evidence="1">(S)-2,3-di-O-geranylgeranylglyceryl phosphate synthase</fullName>
    </alternativeName>
    <alternativeName>
        <fullName evidence="1">Geranylgeranylglycerol-phosphate geranylgeranyltransferase</fullName>
    </alternativeName>
</protein>
<reference key="1">
    <citation type="journal article" date="2008" name="Proc. Natl. Acad. Sci. U.S.A.">
        <title>A korarchaeal genome reveals new insights into the evolution of the Archaea.</title>
        <authorList>
            <person name="Elkins J.G."/>
            <person name="Podar M."/>
            <person name="Graham D.E."/>
            <person name="Makarova K.S."/>
            <person name="Wolf Y."/>
            <person name="Randau L."/>
            <person name="Hedlund B.P."/>
            <person name="Brochier-Armanet C."/>
            <person name="Kunin V."/>
            <person name="Anderson I."/>
            <person name="Lapidus A."/>
            <person name="Goltsman E."/>
            <person name="Barry K."/>
            <person name="Koonin E.V."/>
            <person name="Hugenholtz P."/>
            <person name="Kyrpides N."/>
            <person name="Wanner G."/>
            <person name="Richardson P."/>
            <person name="Keller M."/>
            <person name="Stetter K.O."/>
        </authorList>
    </citation>
    <scope>NUCLEOTIDE SEQUENCE [LARGE SCALE GENOMIC DNA]</scope>
    <source>
        <strain>OPF8</strain>
    </source>
</reference>
<organism>
    <name type="scientific">Korarchaeum cryptofilum (strain OPF8)</name>
    <dbReference type="NCBI Taxonomy" id="374847"/>
    <lineage>
        <taxon>Archaea</taxon>
        <taxon>Thermoproteota</taxon>
        <taxon>Candidatus Korarchaeia</taxon>
        <taxon>Candidatus Korarchaeales</taxon>
        <taxon>Candidatus Korarchaeaceae</taxon>
        <taxon>Candidatus Korarchaeum</taxon>
    </lineage>
</organism>
<name>DGGGP_KORCO</name>
<sequence>MGKLGAYVEISRPKNALMSILGTLTGWVNSTSVYDGRLILACLIPPLVLMAGNAINDYYDAEIDAINKPYRPIPSGRISKREALNIYIALSLFGIALSIFLGFIEFLIVTAFSLSWYAYARWLKRTGVPGNALVSLGVAFTLIFGSLAAGNLTNKVIIFSSVAFTSNLIREFVKAVEDLPGDRAHGVRTIAVRIGVKRTGILVFLLSLATVVLTILPVIFRLTGIIYLSLSVIISLPILMLASAICLKGKLEERARETSSLIKVSMFLGLLGMLLDPFRVV</sequence>
<feature type="chain" id="PRO_0000350698" description="Digeranylgeranylglyceryl phosphate synthase">
    <location>
        <begin position="1"/>
        <end position="281"/>
    </location>
</feature>
<feature type="transmembrane region" description="Helical" evidence="1">
    <location>
        <begin position="88"/>
        <end position="108"/>
    </location>
</feature>
<feature type="transmembrane region" description="Helical" evidence="1">
    <location>
        <begin position="132"/>
        <end position="152"/>
    </location>
</feature>
<feature type="transmembrane region" description="Helical" evidence="1">
    <location>
        <begin position="200"/>
        <end position="220"/>
    </location>
</feature>
<feature type="transmembrane region" description="Helical" evidence="1">
    <location>
        <begin position="225"/>
        <end position="245"/>
    </location>
</feature>
<feature type="transmembrane region" description="Helical" evidence="1">
    <location>
        <begin position="261"/>
        <end position="281"/>
    </location>
</feature>
<dbReference type="EC" id="2.5.1.42" evidence="1"/>
<dbReference type="EMBL" id="CP000968">
    <property type="protein sequence ID" value="ACB08226.1"/>
    <property type="molecule type" value="Genomic_DNA"/>
</dbReference>
<dbReference type="RefSeq" id="WP_012310123.1">
    <property type="nucleotide sequence ID" value="NC_010482.1"/>
</dbReference>
<dbReference type="SMR" id="B1L6Z7"/>
<dbReference type="FunCoup" id="B1L6Z7">
    <property type="interactions" value="11"/>
</dbReference>
<dbReference type="STRING" id="374847.Kcr_1480"/>
<dbReference type="EnsemblBacteria" id="ACB08226">
    <property type="protein sequence ID" value="ACB08226"/>
    <property type="gene ID" value="Kcr_1480"/>
</dbReference>
<dbReference type="GeneID" id="6094757"/>
<dbReference type="KEGG" id="kcr:Kcr_1480"/>
<dbReference type="eggNOG" id="arCOG00476">
    <property type="taxonomic scope" value="Archaea"/>
</dbReference>
<dbReference type="HOGENOM" id="CLU_073311_1_1_2"/>
<dbReference type="InParanoid" id="B1L6Z7"/>
<dbReference type="OrthoDB" id="11851at2157"/>
<dbReference type="PhylomeDB" id="B1L6Z7"/>
<dbReference type="UniPathway" id="UPA00940"/>
<dbReference type="Proteomes" id="UP000001686">
    <property type="component" value="Chromosome"/>
</dbReference>
<dbReference type="GO" id="GO:0005886">
    <property type="term" value="C:plasma membrane"/>
    <property type="evidence" value="ECO:0007669"/>
    <property type="project" value="UniProtKB-SubCell"/>
</dbReference>
<dbReference type="GO" id="GO:0047295">
    <property type="term" value="F:geranylgeranylglycerol-phosphate geranylgeranyltransferase activity"/>
    <property type="evidence" value="ECO:0007669"/>
    <property type="project" value="UniProtKB-UniRule"/>
</dbReference>
<dbReference type="GO" id="GO:0000287">
    <property type="term" value="F:magnesium ion binding"/>
    <property type="evidence" value="ECO:0007669"/>
    <property type="project" value="UniProtKB-UniRule"/>
</dbReference>
<dbReference type="GO" id="GO:0046474">
    <property type="term" value="P:glycerophospholipid biosynthetic process"/>
    <property type="evidence" value="ECO:0007669"/>
    <property type="project" value="UniProtKB-UniRule"/>
</dbReference>
<dbReference type="CDD" id="cd13961">
    <property type="entry name" value="PT_UbiA_DGGGPS"/>
    <property type="match status" value="1"/>
</dbReference>
<dbReference type="Gene3D" id="1.10.357.140">
    <property type="entry name" value="UbiA prenyltransferase"/>
    <property type="match status" value="1"/>
</dbReference>
<dbReference type="Gene3D" id="1.20.120.1780">
    <property type="entry name" value="UbiA prenyltransferase"/>
    <property type="match status" value="1"/>
</dbReference>
<dbReference type="HAMAP" id="MF_01286">
    <property type="entry name" value="DGGGP_synth"/>
    <property type="match status" value="1"/>
</dbReference>
<dbReference type="InterPro" id="IPR023547">
    <property type="entry name" value="DGGGP_synth"/>
</dbReference>
<dbReference type="InterPro" id="IPR050475">
    <property type="entry name" value="Prenyltransferase_related"/>
</dbReference>
<dbReference type="InterPro" id="IPR000537">
    <property type="entry name" value="UbiA_prenyltransferase"/>
</dbReference>
<dbReference type="InterPro" id="IPR044878">
    <property type="entry name" value="UbiA_sf"/>
</dbReference>
<dbReference type="PANTHER" id="PTHR42723">
    <property type="entry name" value="CHLOROPHYLL SYNTHASE"/>
    <property type="match status" value="1"/>
</dbReference>
<dbReference type="PANTHER" id="PTHR42723:SF1">
    <property type="entry name" value="CHLOROPHYLL SYNTHASE, CHLOROPLASTIC"/>
    <property type="match status" value="1"/>
</dbReference>
<dbReference type="Pfam" id="PF01040">
    <property type="entry name" value="UbiA"/>
    <property type="match status" value="1"/>
</dbReference>
<accession>B1L6Z7</accession>
<evidence type="ECO:0000255" key="1">
    <source>
        <dbReference type="HAMAP-Rule" id="MF_01286"/>
    </source>
</evidence>